<protein>
    <recommendedName>
        <fullName evidence="4">Small ribosomal subunit protein eS8</fullName>
    </recommendedName>
    <alternativeName>
        <fullName>40S ribosomal protein S8</fullName>
    </alternativeName>
</protein>
<name>RS8_XENLA</name>
<sequence>MGISRDNWHKRRKTGGKRKPYHKKRKYEPGRPAANTKIGPRRIHTVRVRGGNKKYRALRLDAGNFSWGSECCTRKTRIIDVVYNASNNELVRTKTLVKNCILLVDSTPFRQWFEAHYALPLGRKKGAKLTPEEEEILNKKRSKKTQKKYEERKKTAKISPLLEEQFQQGKLLACIASRPGQCGRADGYVLEGKELEFYLRKIKAKKGK</sequence>
<keyword id="KW-0963">Cytoplasm</keyword>
<keyword id="KW-0449">Lipoprotein</keyword>
<keyword id="KW-0472">Membrane</keyword>
<keyword id="KW-0539">Nucleus</keyword>
<keyword id="KW-1185">Reference proteome</keyword>
<keyword id="KW-0687">Ribonucleoprotein</keyword>
<keyword id="KW-0689">Ribosomal protein</keyword>
<proteinExistence type="evidence at transcript level"/>
<gene>
    <name type="primary">rps8</name>
</gene>
<accession>Q7SYU0</accession>
<comment type="function">
    <text evidence="2">Component of the small ribosomal subunit. The ribosome is a large ribonucleoprotein complex responsible for the synthesis of proteins in the cell. Part of the small subunit (SSU) processome, first precursor of the small eukaryotic ribosomal subunit. During the assembly of the SSU processome in the nucleolus, many ribosome biogenesis factors, an RNA chaperone and ribosomal proteins associate with the nascent pre-rRNA and work in concert to generate RNA folding, modifications, rearrangements and cleavage as well as targeted degradation of pre-ribosomal RNA by the RNA exosome.</text>
</comment>
<comment type="subunit">
    <text evidence="2">Component of the small ribosomal subunit. Identified in a IGF2BP1-dependent mRNP granule complex containing untranslated mRNAs. Part of the small subunit (SSU) processome, composed of more than 70 proteins and the RNA chaperone small nucleolar RNA (snoRNA) U3.</text>
</comment>
<comment type="subcellular location">
    <subcellularLocation>
        <location evidence="2">Cytoplasm</location>
    </subcellularLocation>
    <subcellularLocation>
        <location evidence="2">Membrane</location>
        <topology evidence="2">Lipid-anchor</topology>
    </subcellularLocation>
    <subcellularLocation>
        <location evidence="2">Nucleus</location>
        <location evidence="2">Nucleolus</location>
    </subcellularLocation>
    <text evidence="2">Localized in cytoplasmic mRNP granules containing untranslated mRNAs.</text>
</comment>
<comment type="similarity">
    <text evidence="4">Belongs to the eukaryotic ribosomal protein eS8 family.</text>
</comment>
<dbReference type="EMBL" id="BC054266">
    <property type="protein sequence ID" value="AAH54266.1"/>
    <property type="molecule type" value="mRNA"/>
</dbReference>
<dbReference type="RefSeq" id="NP_001080843.1">
    <property type="nucleotide sequence ID" value="NM_001087374.2"/>
</dbReference>
<dbReference type="SMR" id="Q7SYU0"/>
<dbReference type="BioGRID" id="98779">
    <property type="interactions" value="1"/>
</dbReference>
<dbReference type="DNASU" id="380537"/>
<dbReference type="GeneID" id="380537"/>
<dbReference type="KEGG" id="xla:380537"/>
<dbReference type="AGR" id="Xenbase:XB-GENE-5935325"/>
<dbReference type="CTD" id="380537"/>
<dbReference type="Xenbase" id="XB-GENE-5935325">
    <property type="gene designation" value="rps8.S"/>
</dbReference>
<dbReference type="OrthoDB" id="1703270at2759"/>
<dbReference type="Proteomes" id="UP000186698">
    <property type="component" value="Chromosome 4S"/>
</dbReference>
<dbReference type="Bgee" id="380537">
    <property type="expression patterns" value="Expressed in lung and 19 other cell types or tissues"/>
</dbReference>
<dbReference type="GO" id="GO:0022627">
    <property type="term" value="C:cytosolic small ribosomal subunit"/>
    <property type="evidence" value="ECO:0000318"/>
    <property type="project" value="GO_Central"/>
</dbReference>
<dbReference type="GO" id="GO:0016020">
    <property type="term" value="C:membrane"/>
    <property type="evidence" value="ECO:0007669"/>
    <property type="project" value="UniProtKB-SubCell"/>
</dbReference>
<dbReference type="GO" id="GO:0005730">
    <property type="term" value="C:nucleolus"/>
    <property type="evidence" value="ECO:0007669"/>
    <property type="project" value="UniProtKB-SubCell"/>
</dbReference>
<dbReference type="GO" id="GO:0032040">
    <property type="term" value="C:small-subunit processome"/>
    <property type="evidence" value="ECO:0000250"/>
    <property type="project" value="UniProtKB"/>
</dbReference>
<dbReference type="GO" id="GO:0003735">
    <property type="term" value="F:structural constituent of ribosome"/>
    <property type="evidence" value="ECO:0000318"/>
    <property type="project" value="GO_Central"/>
</dbReference>
<dbReference type="GO" id="GO:0000462">
    <property type="term" value="P:maturation of SSU-rRNA from tricistronic rRNA transcript (SSU-rRNA, 5.8S rRNA, LSU-rRNA)"/>
    <property type="evidence" value="ECO:0000318"/>
    <property type="project" value="GO_Central"/>
</dbReference>
<dbReference type="GO" id="GO:0042274">
    <property type="term" value="P:ribosomal small subunit biogenesis"/>
    <property type="evidence" value="ECO:0000250"/>
    <property type="project" value="UniProtKB"/>
</dbReference>
<dbReference type="GO" id="GO:0006412">
    <property type="term" value="P:translation"/>
    <property type="evidence" value="ECO:0007669"/>
    <property type="project" value="InterPro"/>
</dbReference>
<dbReference type="CDD" id="cd11380">
    <property type="entry name" value="Ribosomal_S8e_like"/>
    <property type="match status" value="1"/>
</dbReference>
<dbReference type="FunFam" id="1.10.168.20:FF:000001">
    <property type="entry name" value="40S ribosomal protein S8"/>
    <property type="match status" value="1"/>
</dbReference>
<dbReference type="FunFam" id="3.10.290.70:FF:000004">
    <property type="entry name" value="40S ribosomal protein S8"/>
    <property type="match status" value="1"/>
</dbReference>
<dbReference type="FunFam" id="3.10.290.70:FF:000005">
    <property type="entry name" value="40S ribosomal protein S8"/>
    <property type="match status" value="1"/>
</dbReference>
<dbReference type="Gene3D" id="3.10.290.70">
    <property type="match status" value="1"/>
</dbReference>
<dbReference type="Gene3D" id="1.10.168.20">
    <property type="entry name" value="Ribosomal protein S8e, subdomain"/>
    <property type="match status" value="1"/>
</dbReference>
<dbReference type="InterPro" id="IPR001047">
    <property type="entry name" value="Ribosomal_eS8"/>
</dbReference>
<dbReference type="InterPro" id="IPR018283">
    <property type="entry name" value="Ribosomal_eS8_CS"/>
</dbReference>
<dbReference type="InterPro" id="IPR042563">
    <property type="entry name" value="Ribosomal_protein_eS8_euk"/>
</dbReference>
<dbReference type="InterPro" id="IPR022309">
    <property type="entry name" value="Ribosomal_Se8/biogenesis_NSA2"/>
</dbReference>
<dbReference type="NCBIfam" id="TIGR00307">
    <property type="entry name" value="eS8"/>
    <property type="match status" value="1"/>
</dbReference>
<dbReference type="PANTHER" id="PTHR10394">
    <property type="entry name" value="40S RIBOSOMAL PROTEIN S8"/>
    <property type="match status" value="1"/>
</dbReference>
<dbReference type="Pfam" id="PF01201">
    <property type="entry name" value="Ribosomal_S8e"/>
    <property type="match status" value="1"/>
</dbReference>
<dbReference type="PROSITE" id="PS01193">
    <property type="entry name" value="RIBOSOMAL_S8E"/>
    <property type="match status" value="1"/>
</dbReference>
<reference key="1">
    <citation type="submission" date="2003-06" db="EMBL/GenBank/DDBJ databases">
        <authorList>
            <consortium name="NIH - Xenopus Gene Collection (XGC) project"/>
        </authorList>
    </citation>
    <scope>NUCLEOTIDE SEQUENCE [LARGE SCALE MRNA]</scope>
</reference>
<feature type="initiator methionine" description="Removed" evidence="1">
    <location>
        <position position="1"/>
    </location>
</feature>
<feature type="chain" id="PRO_0000122245" description="Small ribosomal subunit protein eS8">
    <location>
        <begin position="2"/>
        <end position="208"/>
    </location>
</feature>
<feature type="region of interest" description="Disordered" evidence="3">
    <location>
        <begin position="1"/>
        <end position="37"/>
    </location>
</feature>
<feature type="compositionally biased region" description="Basic residues" evidence="3">
    <location>
        <begin position="8"/>
        <end position="26"/>
    </location>
</feature>
<organism>
    <name type="scientific">Xenopus laevis</name>
    <name type="common">African clawed frog</name>
    <dbReference type="NCBI Taxonomy" id="8355"/>
    <lineage>
        <taxon>Eukaryota</taxon>
        <taxon>Metazoa</taxon>
        <taxon>Chordata</taxon>
        <taxon>Craniata</taxon>
        <taxon>Vertebrata</taxon>
        <taxon>Euteleostomi</taxon>
        <taxon>Amphibia</taxon>
        <taxon>Batrachia</taxon>
        <taxon>Anura</taxon>
        <taxon>Pipoidea</taxon>
        <taxon>Pipidae</taxon>
        <taxon>Xenopodinae</taxon>
        <taxon>Xenopus</taxon>
        <taxon>Xenopus</taxon>
    </lineage>
</organism>
<evidence type="ECO:0000250" key="1"/>
<evidence type="ECO:0000250" key="2">
    <source>
        <dbReference type="UniProtKB" id="P62241"/>
    </source>
</evidence>
<evidence type="ECO:0000256" key="3">
    <source>
        <dbReference type="SAM" id="MobiDB-lite"/>
    </source>
</evidence>
<evidence type="ECO:0000305" key="4"/>